<sequence>MAYVLTVASNVNMREPSESKESESETSDDAASDDDDEEEEAQPASNAYATLLQSFSTRHAGSDEHRKKRRKLGHEEAPQEDVSDAEGASVYGTPEGDGTVVDPEQNETDDEAADEDDGKEQELEKAYEKHFASPDENELATRLKRIATNQWSSQKLTCGSGTTKGFGVLQIPGEEVQPPPRKVKSVHDIQLKQRLVDNALKKVGNFDQVEQTIAPSIFGYQDLLFGARTVQNAARLRDITCLHALNHILMTRDRVLKNNAKLAAAPDDVDAEYRDQGFTRPKILFLLETKQACVRILDSITKLHDFEQQENKKRFLDSFSQPEDKFSEDRPADFRELFEGNDENEFRIGVKLTRKTLKLYSTFYNSDIIFASTLGLRRAIESGDPKKKDYDFLSSIEMVIMEQADAALMQNWEHAEYVFEHINLQPKDAHGCDFSRVRSWYLDGHAPNIRQTIVLSAFITPKINTLYNKHMRNVAGRLKYTADHTDGLIESLSYGIKQTFVRFDSPSHLTDPDARFKYFSSSVLPSITRLPRTAEAGGLGVLVFIPSYLDFVRVRNSLVDSDFSYASISEYTDATDVRKARSHFMNGKHSLLLYTGRAHHFHRYNIRGVKRVVFYGVPENPKFYDEVLGFVGKSIERAEISRQEASVRVCFSKWEKMELERIVGSKRVGRLVRDRGDVFDFV</sequence>
<accession>E3REX5</accession>
<evidence type="ECO:0000250" key="1"/>
<evidence type="ECO:0000256" key="2">
    <source>
        <dbReference type="SAM" id="MobiDB-lite"/>
    </source>
</evidence>
<evidence type="ECO:0000305" key="3"/>
<dbReference type="EMBL" id="GL532563">
    <property type="protein sequence ID" value="EFQ95724.1"/>
    <property type="molecule type" value="Genomic_DNA"/>
</dbReference>
<dbReference type="RefSeq" id="XP_003296180.1">
    <property type="nucleotide sequence ID" value="XM_003296132.1"/>
</dbReference>
<dbReference type="STRING" id="861557.E3REX5"/>
<dbReference type="EnsemblFungi" id="EFQ95724">
    <property type="protein sequence ID" value="EFQ95724"/>
    <property type="gene ID" value="PTT_05278"/>
</dbReference>
<dbReference type="KEGG" id="pte:PTT_05278"/>
<dbReference type="eggNOG" id="KOG2340">
    <property type="taxonomic scope" value="Eukaryota"/>
</dbReference>
<dbReference type="HOGENOM" id="CLU_018705_0_1_1"/>
<dbReference type="OrthoDB" id="10264378at2759"/>
<dbReference type="Proteomes" id="UP000001067">
    <property type="component" value="Unassembled WGS sequence"/>
</dbReference>
<dbReference type="GO" id="GO:0005730">
    <property type="term" value="C:nucleolus"/>
    <property type="evidence" value="ECO:0007669"/>
    <property type="project" value="UniProtKB-SubCell"/>
</dbReference>
<dbReference type="GO" id="GO:0032040">
    <property type="term" value="C:small-subunit processome"/>
    <property type="evidence" value="ECO:0007669"/>
    <property type="project" value="EnsemblFungi"/>
</dbReference>
<dbReference type="GO" id="GO:0019843">
    <property type="term" value="F:rRNA binding"/>
    <property type="evidence" value="ECO:0007669"/>
    <property type="project" value="EnsemblFungi"/>
</dbReference>
<dbReference type="GO" id="GO:0034511">
    <property type="term" value="F:U3 snoRNA binding"/>
    <property type="evidence" value="ECO:0007669"/>
    <property type="project" value="EnsemblFungi"/>
</dbReference>
<dbReference type="GO" id="GO:0000462">
    <property type="term" value="P:maturation of SSU-rRNA from tricistronic rRNA transcript (SSU-rRNA, 5.8S rRNA, LSU-rRNA)"/>
    <property type="evidence" value="ECO:0007669"/>
    <property type="project" value="EnsemblFungi"/>
</dbReference>
<dbReference type="FunFam" id="3.40.50.300:FF:002356">
    <property type="entry name" value="U3 small nucleolar RNA-associated protein 25"/>
    <property type="match status" value="1"/>
</dbReference>
<dbReference type="Gene3D" id="3.40.50.300">
    <property type="entry name" value="P-loop containing nucleotide triphosphate hydrolases"/>
    <property type="match status" value="1"/>
</dbReference>
<dbReference type="InterPro" id="IPR027417">
    <property type="entry name" value="P-loop_NTPase"/>
</dbReference>
<dbReference type="InterPro" id="IPR010678">
    <property type="entry name" value="UTP25"/>
</dbReference>
<dbReference type="InterPro" id="IPR053939">
    <property type="entry name" value="UTP25_C"/>
</dbReference>
<dbReference type="InterPro" id="IPR053940">
    <property type="entry name" value="UTP25_NTPase-like"/>
</dbReference>
<dbReference type="PANTHER" id="PTHR12933">
    <property type="entry name" value="ORF PROTEIN-RELATED"/>
    <property type="match status" value="1"/>
</dbReference>
<dbReference type="PANTHER" id="PTHR12933:SF0">
    <property type="entry name" value="U3 SMALL NUCLEOLAR RNA-ASSOCIATED PROTEIN 25 HOMOLOG"/>
    <property type="match status" value="1"/>
</dbReference>
<dbReference type="Pfam" id="PF06862">
    <property type="entry name" value="Utp25_C"/>
    <property type="match status" value="1"/>
</dbReference>
<dbReference type="Pfam" id="PF22916">
    <property type="entry name" value="UTP25_NTPase-like"/>
    <property type="match status" value="1"/>
</dbReference>
<dbReference type="SUPFAM" id="SSF52540">
    <property type="entry name" value="P-loop containing nucleoside triphosphate hydrolases"/>
    <property type="match status" value="1"/>
</dbReference>
<name>UTP25_PYRTT</name>
<feature type="chain" id="PRO_0000408137" description="U3 small nucleolar RNA-associated protein 25">
    <location>
        <begin position="1"/>
        <end position="682"/>
    </location>
</feature>
<feature type="region of interest" description="Disordered" evidence="2">
    <location>
        <begin position="1"/>
        <end position="136"/>
    </location>
</feature>
<feature type="compositionally biased region" description="Acidic residues" evidence="2">
    <location>
        <begin position="24"/>
        <end position="41"/>
    </location>
</feature>
<feature type="compositionally biased region" description="Polar residues" evidence="2">
    <location>
        <begin position="43"/>
        <end position="59"/>
    </location>
</feature>
<feature type="compositionally biased region" description="Acidic residues" evidence="2">
    <location>
        <begin position="104"/>
        <end position="119"/>
    </location>
</feature>
<feature type="compositionally biased region" description="Basic and acidic residues" evidence="2">
    <location>
        <begin position="120"/>
        <end position="133"/>
    </location>
</feature>
<comment type="function">
    <text evidence="1">DEAD-box RNA helicase-like protein required for pre-18S rRNA processing, specifically at sites A0, A1, and A2.</text>
</comment>
<comment type="subunit">
    <text evidence="1">Component of the ribosomal small subunit (SSU) processome composed of at least 40 protein subunits and snoRNA U3.</text>
</comment>
<comment type="subcellular location">
    <subcellularLocation>
        <location evidence="1">Nucleus</location>
        <location evidence="1">Nucleolus</location>
    </subcellularLocation>
</comment>
<comment type="similarity">
    <text evidence="3">Belongs to the UTP25 family.</text>
</comment>
<keyword id="KW-0539">Nucleus</keyword>
<keyword id="KW-1185">Reference proteome</keyword>
<keyword id="KW-0687">Ribonucleoprotein</keyword>
<keyword id="KW-0690">Ribosome biogenesis</keyword>
<keyword id="KW-0698">rRNA processing</keyword>
<organism>
    <name type="scientific">Pyrenophora teres f. teres (strain 0-1)</name>
    <name type="common">Barley net blotch fungus</name>
    <name type="synonym">Drechslera teres f. teres</name>
    <dbReference type="NCBI Taxonomy" id="861557"/>
    <lineage>
        <taxon>Eukaryota</taxon>
        <taxon>Fungi</taxon>
        <taxon>Dikarya</taxon>
        <taxon>Ascomycota</taxon>
        <taxon>Pezizomycotina</taxon>
        <taxon>Dothideomycetes</taxon>
        <taxon>Pleosporomycetidae</taxon>
        <taxon>Pleosporales</taxon>
        <taxon>Pleosporineae</taxon>
        <taxon>Pleosporaceae</taxon>
        <taxon>Pyrenophora</taxon>
    </lineage>
</organism>
<gene>
    <name type="primary">utp25</name>
    <name type="ORF">PTT_05278</name>
</gene>
<proteinExistence type="inferred from homology"/>
<reference key="1">
    <citation type="journal article" date="2010" name="Genome Biol.">
        <title>A first genome assembly of the barley fungal pathogen Pyrenophora teres f. teres.</title>
        <authorList>
            <person name="Ellwood S.R."/>
            <person name="Liu Z."/>
            <person name="Syme R.A."/>
            <person name="Lai Z."/>
            <person name="Hane J.K."/>
            <person name="Keiper F."/>
            <person name="Moffat C.S."/>
            <person name="Oliver R.P."/>
            <person name="Friesen T.L."/>
        </authorList>
    </citation>
    <scope>NUCLEOTIDE SEQUENCE [LARGE SCALE GENOMIC DNA]</scope>
    <source>
        <strain>0-1</strain>
    </source>
</reference>
<protein>
    <recommendedName>
        <fullName>U3 small nucleolar RNA-associated protein 25</fullName>
        <shortName>U3 snoRNA-associated protein 25</shortName>
    </recommendedName>
    <alternativeName>
        <fullName>U three protein 25</fullName>
    </alternativeName>
</protein>